<evidence type="ECO:0000255" key="1">
    <source>
        <dbReference type="HAMAP-Rule" id="MF_00083"/>
    </source>
</evidence>
<reference key="1">
    <citation type="journal article" date="2014" name="Stand. Genomic Sci.">
        <title>Complete genome sequence of Anabaena variabilis ATCC 29413.</title>
        <authorList>
            <person name="Thiel T."/>
            <person name="Pratte B.S."/>
            <person name="Zhong J."/>
            <person name="Goodwin L."/>
            <person name="Copeland A."/>
            <person name="Lucas S."/>
            <person name="Han C."/>
            <person name="Pitluck S."/>
            <person name="Land M.L."/>
            <person name="Kyrpides N.C."/>
            <person name="Woyke T."/>
        </authorList>
    </citation>
    <scope>NUCLEOTIDE SEQUENCE [LARGE SCALE GENOMIC DNA]</scope>
    <source>
        <strain>ATCC 29413 / PCC 7937</strain>
    </source>
</reference>
<name>PTH_TRIV2</name>
<accession>Q3M4P0</accession>
<dbReference type="EC" id="3.1.1.29" evidence="1"/>
<dbReference type="EMBL" id="CP000117">
    <property type="protein sequence ID" value="ABA24046.1"/>
    <property type="molecule type" value="Genomic_DNA"/>
</dbReference>
<dbReference type="SMR" id="Q3M4P0"/>
<dbReference type="STRING" id="240292.Ava_4448"/>
<dbReference type="KEGG" id="ava:Ava_4448"/>
<dbReference type="eggNOG" id="COG0193">
    <property type="taxonomic scope" value="Bacteria"/>
</dbReference>
<dbReference type="HOGENOM" id="CLU_062456_4_1_3"/>
<dbReference type="Proteomes" id="UP000002533">
    <property type="component" value="Chromosome"/>
</dbReference>
<dbReference type="GO" id="GO:0005737">
    <property type="term" value="C:cytoplasm"/>
    <property type="evidence" value="ECO:0007669"/>
    <property type="project" value="UniProtKB-SubCell"/>
</dbReference>
<dbReference type="GO" id="GO:0004045">
    <property type="term" value="F:peptidyl-tRNA hydrolase activity"/>
    <property type="evidence" value="ECO:0007669"/>
    <property type="project" value="UniProtKB-UniRule"/>
</dbReference>
<dbReference type="GO" id="GO:0000049">
    <property type="term" value="F:tRNA binding"/>
    <property type="evidence" value="ECO:0007669"/>
    <property type="project" value="UniProtKB-UniRule"/>
</dbReference>
<dbReference type="GO" id="GO:0006515">
    <property type="term" value="P:protein quality control for misfolded or incompletely synthesized proteins"/>
    <property type="evidence" value="ECO:0007669"/>
    <property type="project" value="UniProtKB-UniRule"/>
</dbReference>
<dbReference type="GO" id="GO:0072344">
    <property type="term" value="P:rescue of stalled ribosome"/>
    <property type="evidence" value="ECO:0007669"/>
    <property type="project" value="UniProtKB-UniRule"/>
</dbReference>
<dbReference type="CDD" id="cd00462">
    <property type="entry name" value="PTH"/>
    <property type="match status" value="1"/>
</dbReference>
<dbReference type="FunFam" id="3.40.50.1470:FF:000001">
    <property type="entry name" value="Peptidyl-tRNA hydrolase"/>
    <property type="match status" value="1"/>
</dbReference>
<dbReference type="Gene3D" id="3.40.50.1470">
    <property type="entry name" value="Peptidyl-tRNA hydrolase"/>
    <property type="match status" value="1"/>
</dbReference>
<dbReference type="HAMAP" id="MF_00083">
    <property type="entry name" value="Pept_tRNA_hydro_bact"/>
    <property type="match status" value="1"/>
</dbReference>
<dbReference type="InterPro" id="IPR001328">
    <property type="entry name" value="Pept_tRNA_hydro"/>
</dbReference>
<dbReference type="InterPro" id="IPR018171">
    <property type="entry name" value="Pept_tRNA_hydro_CS"/>
</dbReference>
<dbReference type="InterPro" id="IPR036416">
    <property type="entry name" value="Pept_tRNA_hydro_sf"/>
</dbReference>
<dbReference type="NCBIfam" id="TIGR00447">
    <property type="entry name" value="pth"/>
    <property type="match status" value="1"/>
</dbReference>
<dbReference type="PANTHER" id="PTHR17224">
    <property type="entry name" value="PEPTIDYL-TRNA HYDROLASE"/>
    <property type="match status" value="1"/>
</dbReference>
<dbReference type="PANTHER" id="PTHR17224:SF1">
    <property type="entry name" value="PEPTIDYL-TRNA HYDROLASE"/>
    <property type="match status" value="1"/>
</dbReference>
<dbReference type="Pfam" id="PF01195">
    <property type="entry name" value="Pept_tRNA_hydro"/>
    <property type="match status" value="1"/>
</dbReference>
<dbReference type="SUPFAM" id="SSF53178">
    <property type="entry name" value="Peptidyl-tRNA hydrolase-like"/>
    <property type="match status" value="1"/>
</dbReference>
<dbReference type="PROSITE" id="PS01195">
    <property type="entry name" value="PEPT_TRNA_HYDROL_1"/>
    <property type="match status" value="1"/>
</dbReference>
<proteinExistence type="inferred from homology"/>
<organism>
    <name type="scientific">Trichormus variabilis (strain ATCC 29413 / PCC 7937)</name>
    <name type="common">Anabaena variabilis</name>
    <dbReference type="NCBI Taxonomy" id="240292"/>
    <lineage>
        <taxon>Bacteria</taxon>
        <taxon>Bacillati</taxon>
        <taxon>Cyanobacteriota</taxon>
        <taxon>Cyanophyceae</taxon>
        <taxon>Nostocales</taxon>
        <taxon>Nostocaceae</taxon>
        <taxon>Trichormus</taxon>
    </lineage>
</organism>
<keyword id="KW-0963">Cytoplasm</keyword>
<keyword id="KW-0378">Hydrolase</keyword>
<keyword id="KW-0694">RNA-binding</keyword>
<keyword id="KW-0820">tRNA-binding</keyword>
<gene>
    <name evidence="1" type="primary">pth</name>
    <name type="ordered locus">Ava_4448</name>
</gene>
<feature type="chain" id="PRO_0000264002" description="Peptidyl-tRNA hydrolase">
    <location>
        <begin position="1"/>
        <end position="213"/>
    </location>
</feature>
<feature type="active site" description="Proton acceptor" evidence="1">
    <location>
        <position position="31"/>
    </location>
</feature>
<feature type="binding site" evidence="1">
    <location>
        <position position="26"/>
    </location>
    <ligand>
        <name>tRNA</name>
        <dbReference type="ChEBI" id="CHEBI:17843"/>
    </ligand>
</feature>
<feature type="binding site" evidence="1">
    <location>
        <position position="78"/>
    </location>
    <ligand>
        <name>tRNA</name>
        <dbReference type="ChEBI" id="CHEBI:17843"/>
    </ligand>
</feature>
<feature type="binding site" evidence="1">
    <location>
        <position position="80"/>
    </location>
    <ligand>
        <name>tRNA</name>
        <dbReference type="ChEBI" id="CHEBI:17843"/>
    </ligand>
</feature>
<feature type="binding site" evidence="1">
    <location>
        <position position="126"/>
    </location>
    <ligand>
        <name>tRNA</name>
        <dbReference type="ChEBI" id="CHEBI:17843"/>
    </ligand>
</feature>
<feature type="site" description="Discriminates between blocked and unblocked aminoacyl-tRNA" evidence="1">
    <location>
        <position position="21"/>
    </location>
</feature>
<feature type="site" description="Stabilizes the basic form of H active site to accept a proton" evidence="1">
    <location>
        <position position="105"/>
    </location>
</feature>
<comment type="function">
    <text evidence="1">Hydrolyzes ribosome-free peptidyl-tRNAs (with 1 or more amino acids incorporated), which drop off the ribosome during protein synthesis, or as a result of ribosome stalling.</text>
</comment>
<comment type="function">
    <text evidence="1">Catalyzes the release of premature peptidyl moieties from peptidyl-tRNA molecules trapped in stalled 50S ribosomal subunits, and thus maintains levels of free tRNAs and 50S ribosomes.</text>
</comment>
<comment type="catalytic activity">
    <reaction evidence="1">
        <text>an N-acyl-L-alpha-aminoacyl-tRNA + H2O = an N-acyl-L-amino acid + a tRNA + H(+)</text>
        <dbReference type="Rhea" id="RHEA:54448"/>
        <dbReference type="Rhea" id="RHEA-COMP:10123"/>
        <dbReference type="Rhea" id="RHEA-COMP:13883"/>
        <dbReference type="ChEBI" id="CHEBI:15377"/>
        <dbReference type="ChEBI" id="CHEBI:15378"/>
        <dbReference type="ChEBI" id="CHEBI:59874"/>
        <dbReference type="ChEBI" id="CHEBI:78442"/>
        <dbReference type="ChEBI" id="CHEBI:138191"/>
        <dbReference type="EC" id="3.1.1.29"/>
    </reaction>
</comment>
<comment type="subunit">
    <text evidence="1">Monomer.</text>
</comment>
<comment type="subcellular location">
    <subcellularLocation>
        <location evidence="1">Cytoplasm</location>
    </subcellularLocation>
</comment>
<comment type="similarity">
    <text evidence="1">Belongs to the PTH family.</text>
</comment>
<sequence>MTEPVTQPALVIPQLIVGLGNPEPKYDQTRHNIGFAAVDALARAWNISLAENRKFQGQYGEGTAPGGVKIRLLKPLTYMNRSGQAIQAVTSWYKLSGESVLVIYDDLDLPLGKTRLRLSGSAGGHNGMKSAIAHLSTQNFPRLRIGIGKPKNAVNGDNSETVSHVLGKFSATETQLMSLVLQFVVECVELSLKQGVEKAMNRCNSYTVEAPKS</sequence>
<protein>
    <recommendedName>
        <fullName evidence="1">Peptidyl-tRNA hydrolase</fullName>
        <shortName evidence="1">Pth</shortName>
        <ecNumber evidence="1">3.1.1.29</ecNumber>
    </recommendedName>
</protein>